<gene>
    <name evidence="1" type="primary">lacZ</name>
    <name type="ordered locus">YPA_1868</name>
</gene>
<name>BGAL_YERPA</name>
<reference key="1">
    <citation type="journal article" date="2006" name="J. Bacteriol.">
        <title>Complete genome sequence of Yersinia pestis strains Antiqua and Nepal516: evidence of gene reduction in an emerging pathogen.</title>
        <authorList>
            <person name="Chain P.S.G."/>
            <person name="Hu P."/>
            <person name="Malfatti S.A."/>
            <person name="Radnedge L."/>
            <person name="Larimer F."/>
            <person name="Vergez L.M."/>
            <person name="Worsham P."/>
            <person name="Chu M.C."/>
            <person name="Andersen G.L."/>
        </authorList>
    </citation>
    <scope>NUCLEOTIDE SEQUENCE [LARGE SCALE GENOMIC DNA]</scope>
    <source>
        <strain>Antiqua</strain>
    </source>
</reference>
<dbReference type="EC" id="3.2.1.23" evidence="1"/>
<dbReference type="EMBL" id="CP000308">
    <property type="protein sequence ID" value="ABG13834.1"/>
    <property type="molecule type" value="Genomic_DNA"/>
</dbReference>
<dbReference type="RefSeq" id="WP_002214048.1">
    <property type="nucleotide sequence ID" value="NZ_CP009906.1"/>
</dbReference>
<dbReference type="SMR" id="Q1C6T8"/>
<dbReference type="CAZy" id="GH2">
    <property type="family name" value="Glycoside Hydrolase Family 2"/>
</dbReference>
<dbReference type="KEGG" id="ypa:YPA_1868"/>
<dbReference type="Proteomes" id="UP000001971">
    <property type="component" value="Chromosome"/>
</dbReference>
<dbReference type="GO" id="GO:0009341">
    <property type="term" value="C:beta-galactosidase complex"/>
    <property type="evidence" value="ECO:0007669"/>
    <property type="project" value="InterPro"/>
</dbReference>
<dbReference type="GO" id="GO:0004565">
    <property type="term" value="F:beta-galactosidase activity"/>
    <property type="evidence" value="ECO:0007669"/>
    <property type="project" value="UniProtKB-EC"/>
</dbReference>
<dbReference type="GO" id="GO:0030246">
    <property type="term" value="F:carbohydrate binding"/>
    <property type="evidence" value="ECO:0007669"/>
    <property type="project" value="InterPro"/>
</dbReference>
<dbReference type="GO" id="GO:0000287">
    <property type="term" value="F:magnesium ion binding"/>
    <property type="evidence" value="ECO:0007669"/>
    <property type="project" value="UniProtKB-UniRule"/>
</dbReference>
<dbReference type="GO" id="GO:0005990">
    <property type="term" value="P:lactose catabolic process"/>
    <property type="evidence" value="ECO:0007669"/>
    <property type="project" value="TreeGrafter"/>
</dbReference>
<dbReference type="FunFam" id="2.60.120.260:FF:000058">
    <property type="entry name" value="Beta-galactosidase"/>
    <property type="match status" value="1"/>
</dbReference>
<dbReference type="FunFam" id="3.20.20.80:FF:000018">
    <property type="entry name" value="Beta-galactosidase"/>
    <property type="match status" value="1"/>
</dbReference>
<dbReference type="Gene3D" id="2.70.98.10">
    <property type="match status" value="1"/>
</dbReference>
<dbReference type="Gene3D" id="2.60.120.260">
    <property type="entry name" value="Galactose-binding domain-like"/>
    <property type="match status" value="1"/>
</dbReference>
<dbReference type="Gene3D" id="3.20.20.80">
    <property type="entry name" value="Glycosidases"/>
    <property type="match status" value="1"/>
</dbReference>
<dbReference type="Gene3D" id="2.60.40.10">
    <property type="entry name" value="Immunoglobulins"/>
    <property type="match status" value="2"/>
</dbReference>
<dbReference type="HAMAP" id="MF_01687">
    <property type="entry name" value="Beta_gal"/>
    <property type="match status" value="1"/>
</dbReference>
<dbReference type="InterPro" id="IPR004199">
    <property type="entry name" value="B-gal_small/dom_5"/>
</dbReference>
<dbReference type="InterPro" id="IPR050347">
    <property type="entry name" value="Bact_Beta-galactosidase"/>
</dbReference>
<dbReference type="InterPro" id="IPR036156">
    <property type="entry name" value="Beta-gal/glucu_dom_sf"/>
</dbReference>
<dbReference type="InterPro" id="IPR011013">
    <property type="entry name" value="Gal_mutarotase_sf_dom"/>
</dbReference>
<dbReference type="InterPro" id="IPR008979">
    <property type="entry name" value="Galactose-bd-like_sf"/>
</dbReference>
<dbReference type="InterPro" id="IPR014718">
    <property type="entry name" value="GH-type_carb-bd"/>
</dbReference>
<dbReference type="InterPro" id="IPR006101">
    <property type="entry name" value="Glyco_hydro_2"/>
</dbReference>
<dbReference type="InterPro" id="IPR023232">
    <property type="entry name" value="Glyco_hydro_2_AS"/>
</dbReference>
<dbReference type="InterPro" id="IPR023933">
    <property type="entry name" value="Glyco_hydro_2_beta_Galsidase"/>
</dbReference>
<dbReference type="InterPro" id="IPR006103">
    <property type="entry name" value="Glyco_hydro_2_cat"/>
</dbReference>
<dbReference type="InterPro" id="IPR023230">
    <property type="entry name" value="Glyco_hydro_2_CS"/>
</dbReference>
<dbReference type="InterPro" id="IPR006102">
    <property type="entry name" value="Glyco_hydro_2_Ig-like"/>
</dbReference>
<dbReference type="InterPro" id="IPR006104">
    <property type="entry name" value="Glyco_hydro_2_N"/>
</dbReference>
<dbReference type="InterPro" id="IPR017853">
    <property type="entry name" value="Glycoside_hydrolase_SF"/>
</dbReference>
<dbReference type="InterPro" id="IPR013783">
    <property type="entry name" value="Ig-like_fold"/>
</dbReference>
<dbReference type="InterPro" id="IPR032312">
    <property type="entry name" value="LacZ_4"/>
</dbReference>
<dbReference type="NCBIfam" id="NF007074">
    <property type="entry name" value="PRK09525.1"/>
    <property type="match status" value="1"/>
</dbReference>
<dbReference type="PANTHER" id="PTHR46323">
    <property type="entry name" value="BETA-GALACTOSIDASE"/>
    <property type="match status" value="1"/>
</dbReference>
<dbReference type="PANTHER" id="PTHR46323:SF2">
    <property type="entry name" value="BETA-GALACTOSIDASE"/>
    <property type="match status" value="1"/>
</dbReference>
<dbReference type="Pfam" id="PF02929">
    <property type="entry name" value="Bgal_small_N"/>
    <property type="match status" value="1"/>
</dbReference>
<dbReference type="Pfam" id="PF00703">
    <property type="entry name" value="Glyco_hydro_2"/>
    <property type="match status" value="1"/>
</dbReference>
<dbReference type="Pfam" id="PF02836">
    <property type="entry name" value="Glyco_hydro_2_C"/>
    <property type="match status" value="1"/>
</dbReference>
<dbReference type="Pfam" id="PF02837">
    <property type="entry name" value="Glyco_hydro_2_N"/>
    <property type="match status" value="1"/>
</dbReference>
<dbReference type="Pfam" id="PF16353">
    <property type="entry name" value="LacZ_4"/>
    <property type="match status" value="1"/>
</dbReference>
<dbReference type="PRINTS" id="PR00132">
    <property type="entry name" value="GLHYDRLASE2"/>
</dbReference>
<dbReference type="SMART" id="SM01038">
    <property type="entry name" value="Bgal_small_N"/>
    <property type="match status" value="1"/>
</dbReference>
<dbReference type="SUPFAM" id="SSF51445">
    <property type="entry name" value="(Trans)glycosidases"/>
    <property type="match status" value="1"/>
</dbReference>
<dbReference type="SUPFAM" id="SSF49303">
    <property type="entry name" value="beta-Galactosidase/glucuronidase domain"/>
    <property type="match status" value="2"/>
</dbReference>
<dbReference type="SUPFAM" id="SSF74650">
    <property type="entry name" value="Galactose mutarotase-like"/>
    <property type="match status" value="1"/>
</dbReference>
<dbReference type="SUPFAM" id="SSF49785">
    <property type="entry name" value="Galactose-binding domain-like"/>
    <property type="match status" value="1"/>
</dbReference>
<dbReference type="PROSITE" id="PS00719">
    <property type="entry name" value="GLYCOSYL_HYDROL_F2_1"/>
    <property type="match status" value="1"/>
</dbReference>
<dbReference type="PROSITE" id="PS00608">
    <property type="entry name" value="GLYCOSYL_HYDROL_F2_2"/>
    <property type="match status" value="1"/>
</dbReference>
<comment type="catalytic activity">
    <reaction evidence="1">
        <text>Hydrolysis of terminal non-reducing beta-D-galactose residues in beta-D-galactosides.</text>
        <dbReference type="EC" id="3.2.1.23"/>
    </reaction>
</comment>
<comment type="cofactor">
    <cofactor evidence="1">
        <name>Mg(2+)</name>
        <dbReference type="ChEBI" id="CHEBI:18420"/>
    </cofactor>
    <text evidence="1">Binds 2 magnesium ions per monomer.</text>
</comment>
<comment type="cofactor">
    <cofactor evidence="1">
        <name>Na(+)</name>
        <dbReference type="ChEBI" id="CHEBI:29101"/>
    </cofactor>
    <text evidence="1">Binds 1 sodium ion per monomer.</text>
</comment>
<comment type="subunit">
    <text evidence="1">Homotetramer.</text>
</comment>
<comment type="similarity">
    <text evidence="1">Belongs to the glycosyl hydrolase 2 family.</text>
</comment>
<proteinExistence type="inferred from homology"/>
<feature type="chain" id="PRO_0000367018" description="Beta-galactosidase">
    <location>
        <begin position="1"/>
        <end position="1060"/>
    </location>
</feature>
<feature type="active site" description="Proton donor" evidence="1">
    <location>
        <position position="477"/>
    </location>
</feature>
<feature type="active site" description="Nucleophile" evidence="1">
    <location>
        <position position="553"/>
    </location>
</feature>
<feature type="binding site" evidence="1">
    <location>
        <position position="110"/>
    </location>
    <ligand>
        <name>substrate</name>
    </ligand>
</feature>
<feature type="binding site" evidence="1">
    <location>
        <position position="209"/>
    </location>
    <ligand>
        <name>Na(+)</name>
        <dbReference type="ChEBI" id="CHEBI:29101"/>
    </ligand>
</feature>
<feature type="binding site" evidence="1">
    <location>
        <position position="209"/>
    </location>
    <ligand>
        <name>substrate</name>
    </ligand>
</feature>
<feature type="binding site" evidence="1">
    <location>
        <position position="432"/>
    </location>
    <ligand>
        <name>Mg(2+)</name>
        <dbReference type="ChEBI" id="CHEBI:18420"/>
        <label>1</label>
    </ligand>
</feature>
<feature type="binding site" evidence="1">
    <location>
        <position position="434"/>
    </location>
    <ligand>
        <name>Mg(2+)</name>
        <dbReference type="ChEBI" id="CHEBI:18420"/>
        <label>1</label>
    </ligand>
</feature>
<feature type="binding site" evidence="1">
    <location>
        <position position="477"/>
    </location>
    <ligand>
        <name>Mg(2+)</name>
        <dbReference type="ChEBI" id="CHEBI:18420"/>
        <label>1</label>
    </ligand>
</feature>
<feature type="binding site" evidence="1">
    <location>
        <position position="477"/>
    </location>
    <ligand>
        <name>substrate</name>
    </ligand>
</feature>
<feature type="binding site" evidence="1">
    <location>
        <begin position="553"/>
        <end position="556"/>
    </location>
    <ligand>
        <name>substrate</name>
    </ligand>
</feature>
<feature type="binding site" evidence="1">
    <location>
        <position position="613"/>
    </location>
    <ligand>
        <name>Mg(2+)</name>
        <dbReference type="ChEBI" id="CHEBI:18420"/>
        <label>2</label>
    </ligand>
</feature>
<feature type="binding site" evidence="1">
    <location>
        <position position="617"/>
    </location>
    <ligand>
        <name>Na(+)</name>
        <dbReference type="ChEBI" id="CHEBI:29101"/>
    </ligand>
</feature>
<feature type="binding site" evidence="1">
    <location>
        <position position="620"/>
    </location>
    <ligand>
        <name>Na(+)</name>
        <dbReference type="ChEBI" id="CHEBI:29101"/>
    </ligand>
</feature>
<feature type="binding site" evidence="1">
    <location>
        <position position="620"/>
    </location>
    <ligand>
        <name>substrate</name>
    </ligand>
</feature>
<feature type="binding site" evidence="1">
    <location>
        <position position="1035"/>
    </location>
    <ligand>
        <name>substrate</name>
    </ligand>
</feature>
<feature type="site" description="Transition state stabilizer" evidence="1">
    <location>
        <position position="373"/>
    </location>
</feature>
<feature type="site" description="Transition state stabilizer" evidence="1">
    <location>
        <position position="407"/>
    </location>
</feature>
<sequence>MTSQEKVPLQVQLSLPQILSRRDWENPQITQYHRLEAHPPFHSWRDVESAQKDRPSPQQQTLNGLWSFSYFTQPEAVPEHWVRCDLAEAKPLPVPANWQLHGYDAPIYTNIQYPIPVNPPRVPDLNPTGCYSRDFTLEPSWLASGKTRIIFDGVSSAFYLWCNGQWVGYSQDSRLPAEFDLTPYLQAGSNRIAVLVLRWSDGSYLEDQDMWRMSGIFRDVKLLHKPEIHLRDIHIMTHLSPEFTSANLEVMAAVNIPSLQLNDPQVTGSYQLRVQLWLADKLVASLQQPLGTQAIDERGPYTDRTQLVLRIDQPLLWSAEQPTLYRAVVSLLNHQQELIEAEAYDVGFRQVAIHQGLLKINGKAVLIRGVNRHEHHPQTGQAIDEESLLQDILLMKQHNFNAVRCSHYPNHPLWYRLCDRYGLYVVDEANIETHGMQPMSRLSDDPSWFSAFSERVTRMVQRDRNHPCIIIWSLGNESGHGATHDALYRWIKTNDPTRPVQYEGGGANTLATDILCPMYARVDEDQPFPAVPKWSIKKWIGLPNESRPLILCEYAHAMGNSFGGFARYWQAFRQYPRLQGGFIWDWVDQSLTHHNDHGQPYWAYGGDFGDTPNDRQFCMNGLVFPDRSPHPSLYEAQCAQQFFQFSLLSTTPLVINITSEYLFRESDNEQLYWRIMLEGESVLEGSQPLNLSPESSQCYRLAEKLPTLNKPGQLWLNVEIRQPKETPWSPAQHRSAWHQWRLPQPLFSPSSDLTNATAHYAPQLQHNLQLQHDLQLQQDEQHIKVTYQQQCWQFSRQTGRLAQWWVADKPMLLRPLQDQFVRAPLDNDIGISEATHIDPNAWVERWKKAGMYQLQQRCLSLHVDHLSHSVQISAEYGYEFEQEPLLHSHWVYRFDRHGRMTIDVNVRIATSLPAPARIGMCCQLADISPTVEWLGLGPHENYPDRQLAAQYGHWSLPLEQMHTAYIFPSENGLRCNTHTLNYGRWTLTGDFHFGISRYSTQQLMVTSHQHLLEPEEGTWLNIDGFHMGVGGDDSWSPSVHIDDILTRETYQYQICWQYKV</sequence>
<keyword id="KW-0326">Glycosidase</keyword>
<keyword id="KW-0378">Hydrolase</keyword>
<keyword id="KW-0460">Magnesium</keyword>
<keyword id="KW-0479">Metal-binding</keyword>
<keyword id="KW-0915">Sodium</keyword>
<accession>Q1C6T8</accession>
<organism>
    <name type="scientific">Yersinia pestis bv. Antiqua (strain Antiqua)</name>
    <dbReference type="NCBI Taxonomy" id="360102"/>
    <lineage>
        <taxon>Bacteria</taxon>
        <taxon>Pseudomonadati</taxon>
        <taxon>Pseudomonadota</taxon>
        <taxon>Gammaproteobacteria</taxon>
        <taxon>Enterobacterales</taxon>
        <taxon>Yersiniaceae</taxon>
        <taxon>Yersinia</taxon>
    </lineage>
</organism>
<protein>
    <recommendedName>
        <fullName evidence="1">Beta-galactosidase</fullName>
        <shortName evidence="1">Beta-gal</shortName>
        <ecNumber evidence="1">3.2.1.23</ecNumber>
    </recommendedName>
    <alternativeName>
        <fullName evidence="1">Lactase</fullName>
    </alternativeName>
</protein>
<evidence type="ECO:0000255" key="1">
    <source>
        <dbReference type="HAMAP-Rule" id="MF_01687"/>
    </source>
</evidence>